<keyword id="KW-0903">Direct protein sequencing</keyword>
<keyword id="KW-1015">Disulfide bond</keyword>
<keyword id="KW-0378">Hydrolase</keyword>
<keyword id="KW-0645">Protease</keyword>
<keyword id="KW-0732">Signal</keyword>
<keyword id="KW-0788">Thiol protease</keyword>
<sequence length="23" mass="2518">LPASVDWRKEGAVLPIRHQGQCG</sequence>
<feature type="signal peptide" evidence="3">
    <location>
        <begin position="1"/>
        <end status="unknown"/>
    </location>
</feature>
<feature type="chain" id="PRO_0000227534" description="Philibertain g 1">
    <location>
        <begin status="unknown"/>
        <end position="23" status="greater than"/>
    </location>
</feature>
<feature type="disulfide bond" evidence="1">
    <location>
        <begin position="22"/>
        <end status="unknown"/>
    </location>
</feature>
<feature type="non-terminal residue" evidence="8">
    <location>
        <position position="23"/>
    </location>
</feature>
<name>PHIG1_PHIGI</name>
<accession>P84789</accession>
<reference evidence="9" key="1">
    <citation type="journal article" date="2005" name="Protein J.">
        <title>Philibertain g I, the most basic cysteine endopeptidase purified from the latex of Philibertia gilliesii Hook. et Arn. (Apocynaceae).</title>
        <authorList>
            <person name="Sequeiros C."/>
            <person name="Torres M.J."/>
            <person name="Trejo S.A."/>
            <person name="Esteves J.L."/>
            <person name="Natalucci C.L."/>
            <person name="Lopez L.M.I."/>
        </authorList>
    </citation>
    <scope>PROTEIN SEQUENCE</scope>
    <scope>CATALYTIC ACTIVITY</scope>
    <scope>ACTIVITY REGULATION</scope>
    <scope>BIOPHYSICOCHEMICAL PROPERTIES</scope>
    <scope>MASS SPECTROMETRY</scope>
    <source>
        <tissue evidence="7">Fruit</tissue>
    </source>
</reference>
<protein>
    <recommendedName>
        <fullName>Philibertain g 1</fullName>
        <ecNumber evidence="2">3.4.22.-</ecNumber>
    </recommendedName>
    <alternativeName>
        <fullName>Philibertain g I</fullName>
    </alternativeName>
</protein>
<dbReference type="EC" id="3.4.22.-" evidence="2"/>
<dbReference type="GO" id="GO:0008234">
    <property type="term" value="F:cysteine-type peptidase activity"/>
    <property type="evidence" value="ECO:0000314"/>
    <property type="project" value="UniProtKB"/>
</dbReference>
<dbReference type="GO" id="GO:0006508">
    <property type="term" value="P:proteolysis"/>
    <property type="evidence" value="ECO:0007669"/>
    <property type="project" value="UniProtKB-KW"/>
</dbReference>
<dbReference type="Gene3D" id="3.90.70.10">
    <property type="entry name" value="Cysteine proteinases"/>
    <property type="match status" value="1"/>
</dbReference>
<dbReference type="InterPro" id="IPR038765">
    <property type="entry name" value="Papain-like_cys_pep_sf"/>
</dbReference>
<dbReference type="InterPro" id="IPR000668">
    <property type="entry name" value="Peptidase_C1A_C"/>
</dbReference>
<dbReference type="Pfam" id="PF00112">
    <property type="entry name" value="Peptidase_C1"/>
    <property type="match status" value="1"/>
</dbReference>
<dbReference type="SUPFAM" id="SSF54001">
    <property type="entry name" value="Cysteine proteinases"/>
    <property type="match status" value="1"/>
</dbReference>
<comment type="function">
    <text>Thiol protease.</text>
</comment>
<comment type="activity regulation">
    <text evidence="7">Strongly inhibited by the cysteine protease inhibitor E64 (L-trans-epoxysuccinyl-leucylamide-(4-guanido)-butane). Not inhibited by the serine protease inhibitor PMSF, the aspartic protease inhibitor pepstatin A, or by the metal ion chelator 1,10-phenanthroline.</text>
</comment>
<comment type="biophysicochemical properties">
    <kinetics>
        <KM evidence="7">0.15 mM for PFLNA</KM>
    </kinetics>
    <phDependence>
        <text evidence="7">Optimum pH for casein is 7.6 and philibertain g 1 retains more than 80% of maximum activity between pH 6.7 and pH 8.7, and 50% of maximum activity between pH 6.1 and pH 9.8. Optimum pH for PFLNA is 6.2-7.2 and philibertain g I retains more than 80% of maximum activity between pH 5.8 and pH 7.8, and 50% of maximum activity between pH 5.2 and pH 8.6.</text>
    </phDependence>
</comment>
<comment type="subunit">
    <text evidence="1">Monomer.</text>
</comment>
<comment type="mass spectrometry" mass="23530.0" method="MALDI" evidence="7"/>
<comment type="similarity">
    <text evidence="4 5 6">Belongs to the peptidase C1 family.</text>
</comment>
<proteinExistence type="evidence at protein level"/>
<evidence type="ECO:0000250" key="1">
    <source>
        <dbReference type="UniProtKB" id="P10056"/>
    </source>
</evidence>
<evidence type="ECO:0000250" key="2">
    <source>
        <dbReference type="UniProtKB" id="P80884"/>
    </source>
</evidence>
<evidence type="ECO:0000255" key="3"/>
<evidence type="ECO:0000255" key="4">
    <source>
        <dbReference type="PROSITE-ProRule" id="PRU10088"/>
    </source>
</evidence>
<evidence type="ECO:0000255" key="5">
    <source>
        <dbReference type="PROSITE-ProRule" id="PRU10089"/>
    </source>
</evidence>
<evidence type="ECO:0000255" key="6">
    <source>
        <dbReference type="PROSITE-ProRule" id="PRU10090"/>
    </source>
</evidence>
<evidence type="ECO:0000269" key="7">
    <source>
    </source>
</evidence>
<evidence type="ECO:0000303" key="8">
    <source>
    </source>
</evidence>
<evidence type="ECO:0000305" key="9"/>
<organism>
    <name type="scientific">Philibertia gilliesii</name>
    <name type="common">Milkweed</name>
    <name type="synonym">Sarcostemma gilliesii</name>
    <dbReference type="NCBI Taxonomy" id="126767"/>
    <lineage>
        <taxon>Eukaryota</taxon>
        <taxon>Viridiplantae</taxon>
        <taxon>Streptophyta</taxon>
        <taxon>Embryophyta</taxon>
        <taxon>Tracheophyta</taxon>
        <taxon>Spermatophyta</taxon>
        <taxon>Magnoliopsida</taxon>
        <taxon>eudicotyledons</taxon>
        <taxon>Gunneridae</taxon>
        <taxon>Pentapetalae</taxon>
        <taxon>asterids</taxon>
        <taxon>lamiids</taxon>
        <taxon>Gentianales</taxon>
        <taxon>Apocynaceae</taxon>
        <taxon>Asclepiadoideae</taxon>
        <taxon>Asclepiadeae</taxon>
        <taxon>MOOG clade</taxon>
        <taxon>Oxypetalinae</taxon>
        <taxon>Philibertia</taxon>
    </lineage>
</organism>